<name>DAAA_STAAC</name>
<sequence length="282" mass="31894">MEKIFLNGEFVSPSEAKVSYNDRGYVFGDGIYEYIRVYNGKLFTVTEHYERFLRSANEIGLDLNYSVEELIELSRKLVDMNQIETGAIYIQATRGVAERNHSFPTPEVEPAIVAYTKSYDRPYDHLENGVNGVTVEDIRWLRCDIKSLNLLGNVLAKEYAVKYNAVEAIQHRGETVTEGSSSNAYAIKDGVIYTHPINNYILNGITRIVIKKIAEDYNIPFKEETFTVDFLKNADEVIVSSTSAEVTPVIKLDGEPVNDGKVGPITRQLQEGFEKYIESHSI</sequence>
<dbReference type="EC" id="2.6.1.21"/>
<dbReference type="EMBL" id="CP000046">
    <property type="protein sequence ID" value="AAW38328.1"/>
    <property type="molecule type" value="Genomic_DNA"/>
</dbReference>
<dbReference type="RefSeq" id="WP_000411085.1">
    <property type="nucleotide sequence ID" value="NZ_JBGOFO010000008.1"/>
</dbReference>
<dbReference type="SMR" id="Q5HF24"/>
<dbReference type="KEGG" id="sac:SACOL1800"/>
<dbReference type="HOGENOM" id="CLU_020844_4_1_9"/>
<dbReference type="Proteomes" id="UP000000530">
    <property type="component" value="Chromosome"/>
</dbReference>
<dbReference type="GO" id="GO:0005829">
    <property type="term" value="C:cytosol"/>
    <property type="evidence" value="ECO:0007669"/>
    <property type="project" value="TreeGrafter"/>
</dbReference>
<dbReference type="GO" id="GO:0047810">
    <property type="term" value="F:D-alanine-2-oxoglutarate aminotransferase activity"/>
    <property type="evidence" value="ECO:0007669"/>
    <property type="project" value="UniProtKB-EC"/>
</dbReference>
<dbReference type="GO" id="GO:0030170">
    <property type="term" value="F:pyridoxal phosphate binding"/>
    <property type="evidence" value="ECO:0007669"/>
    <property type="project" value="InterPro"/>
</dbReference>
<dbReference type="GO" id="GO:0046394">
    <property type="term" value="P:carboxylic acid biosynthetic process"/>
    <property type="evidence" value="ECO:0007669"/>
    <property type="project" value="UniProtKB-ARBA"/>
</dbReference>
<dbReference type="GO" id="GO:0046416">
    <property type="term" value="P:D-amino acid metabolic process"/>
    <property type="evidence" value="ECO:0007669"/>
    <property type="project" value="InterPro"/>
</dbReference>
<dbReference type="CDD" id="cd01558">
    <property type="entry name" value="D-AAT_like"/>
    <property type="match status" value="1"/>
</dbReference>
<dbReference type="FunFam" id="3.20.10.10:FF:000002">
    <property type="entry name" value="D-alanine aminotransferase"/>
    <property type="match status" value="1"/>
</dbReference>
<dbReference type="FunFam" id="3.30.470.10:FF:000009">
    <property type="entry name" value="D-alanine aminotransferase"/>
    <property type="match status" value="1"/>
</dbReference>
<dbReference type="Gene3D" id="3.30.470.10">
    <property type="match status" value="1"/>
</dbReference>
<dbReference type="Gene3D" id="3.20.10.10">
    <property type="entry name" value="D-amino Acid Aminotransferase, subunit A, domain 2"/>
    <property type="match status" value="1"/>
</dbReference>
<dbReference type="InterPro" id="IPR001544">
    <property type="entry name" value="Aminotrans_IV"/>
</dbReference>
<dbReference type="InterPro" id="IPR018300">
    <property type="entry name" value="Aminotrans_IV_CS"/>
</dbReference>
<dbReference type="InterPro" id="IPR036038">
    <property type="entry name" value="Aminotransferase-like"/>
</dbReference>
<dbReference type="InterPro" id="IPR043132">
    <property type="entry name" value="BCAT-like_C"/>
</dbReference>
<dbReference type="InterPro" id="IPR043131">
    <property type="entry name" value="BCAT-like_N"/>
</dbReference>
<dbReference type="InterPro" id="IPR050571">
    <property type="entry name" value="Class-IV_PLP-Dep_Aminotrnsfr"/>
</dbReference>
<dbReference type="InterPro" id="IPR005784">
    <property type="entry name" value="D_amino_transT"/>
</dbReference>
<dbReference type="NCBIfam" id="TIGR01121">
    <property type="entry name" value="D_amino_aminoT"/>
    <property type="match status" value="1"/>
</dbReference>
<dbReference type="PANTHER" id="PTHR42743">
    <property type="entry name" value="AMINO-ACID AMINOTRANSFERASE"/>
    <property type="match status" value="1"/>
</dbReference>
<dbReference type="PANTHER" id="PTHR42743:SF10">
    <property type="entry name" value="D-ALANINE AMINOTRANSFERASE"/>
    <property type="match status" value="1"/>
</dbReference>
<dbReference type="Pfam" id="PF01063">
    <property type="entry name" value="Aminotran_4"/>
    <property type="match status" value="1"/>
</dbReference>
<dbReference type="SUPFAM" id="SSF56752">
    <property type="entry name" value="D-aminoacid aminotransferase-like PLP-dependent enzymes"/>
    <property type="match status" value="1"/>
</dbReference>
<dbReference type="PROSITE" id="PS00770">
    <property type="entry name" value="AA_TRANSFER_CLASS_4"/>
    <property type="match status" value="1"/>
</dbReference>
<reference key="1">
    <citation type="journal article" date="2005" name="J. Bacteriol.">
        <title>Insights on evolution of virulence and resistance from the complete genome analysis of an early methicillin-resistant Staphylococcus aureus strain and a biofilm-producing methicillin-resistant Staphylococcus epidermidis strain.</title>
        <authorList>
            <person name="Gill S.R."/>
            <person name="Fouts D.E."/>
            <person name="Archer G.L."/>
            <person name="Mongodin E.F."/>
            <person name="DeBoy R.T."/>
            <person name="Ravel J."/>
            <person name="Paulsen I.T."/>
            <person name="Kolonay J.F."/>
            <person name="Brinkac L.M."/>
            <person name="Beanan M.J."/>
            <person name="Dodson R.J."/>
            <person name="Daugherty S.C."/>
            <person name="Madupu R."/>
            <person name="Angiuoli S.V."/>
            <person name="Durkin A.S."/>
            <person name="Haft D.H."/>
            <person name="Vamathevan J.J."/>
            <person name="Khouri H."/>
            <person name="Utterback T.R."/>
            <person name="Lee C."/>
            <person name="Dimitrov G."/>
            <person name="Jiang L."/>
            <person name="Qin H."/>
            <person name="Weidman J."/>
            <person name="Tran K."/>
            <person name="Kang K.H."/>
            <person name="Hance I.R."/>
            <person name="Nelson K.E."/>
            <person name="Fraser C.M."/>
        </authorList>
    </citation>
    <scope>NUCLEOTIDE SEQUENCE [LARGE SCALE GENOMIC DNA]</scope>
    <source>
        <strain>COL</strain>
    </source>
</reference>
<gene>
    <name type="primary">dat</name>
    <name type="ordered locus">SACOL1800</name>
</gene>
<feature type="chain" id="PRO_0000103253" description="D-alanine aminotransferase">
    <location>
        <begin position="1"/>
        <end position="282"/>
    </location>
</feature>
<feature type="active site" description="Proton acceptor" evidence="2">
    <location>
        <position position="146"/>
    </location>
</feature>
<feature type="binding site" evidence="2">
    <location>
        <position position="32"/>
    </location>
    <ligand>
        <name>substrate</name>
    </ligand>
</feature>
<feature type="binding site" evidence="2">
    <location>
        <position position="51"/>
    </location>
    <ligand>
        <name>pyridoxal 5'-phosphate</name>
        <dbReference type="ChEBI" id="CHEBI:597326"/>
    </ligand>
</feature>
<feature type="binding site" evidence="2">
    <location>
        <position position="99"/>
    </location>
    <ligand>
        <name>substrate</name>
    </ligand>
</feature>
<feature type="binding site" evidence="2">
    <location>
        <position position="101"/>
    </location>
    <ligand>
        <name>substrate</name>
    </ligand>
</feature>
<feature type="binding site" evidence="2">
    <location>
        <position position="178"/>
    </location>
    <ligand>
        <name>pyridoxal 5'-phosphate</name>
        <dbReference type="ChEBI" id="CHEBI:597326"/>
    </ligand>
</feature>
<feature type="modified residue" description="N6-(pyridoxal phosphate)lysine" evidence="2">
    <location>
        <position position="146"/>
    </location>
</feature>
<accession>Q5HF24</accession>
<evidence type="ECO:0000250" key="1"/>
<evidence type="ECO:0000250" key="2">
    <source>
        <dbReference type="UniProtKB" id="P19938"/>
    </source>
</evidence>
<evidence type="ECO:0000305" key="3"/>
<proteinExistence type="inferred from homology"/>
<keyword id="KW-0032">Aminotransferase</keyword>
<keyword id="KW-0663">Pyridoxal phosphate</keyword>
<keyword id="KW-0808">Transferase</keyword>
<protein>
    <recommendedName>
        <fullName>D-alanine aminotransferase</fullName>
        <ecNumber>2.6.1.21</ecNumber>
    </recommendedName>
    <alternativeName>
        <fullName>D-amino acid aminotransferase</fullName>
    </alternativeName>
    <alternativeName>
        <fullName>D-amino acid transaminase</fullName>
        <shortName>DAAT</shortName>
    </alternativeName>
    <alternativeName>
        <fullName>D-aspartate aminotransferase</fullName>
    </alternativeName>
</protein>
<organism>
    <name type="scientific">Staphylococcus aureus (strain COL)</name>
    <dbReference type="NCBI Taxonomy" id="93062"/>
    <lineage>
        <taxon>Bacteria</taxon>
        <taxon>Bacillati</taxon>
        <taxon>Bacillota</taxon>
        <taxon>Bacilli</taxon>
        <taxon>Bacillales</taxon>
        <taxon>Staphylococcaceae</taxon>
        <taxon>Staphylococcus</taxon>
    </lineage>
</organism>
<comment type="function">
    <text evidence="1">Acts on the D-isomers of alanine, leucine, aspartate, glutamate, aminobutyrate, norvaline and asparagine. The enzyme transfers an amino group from a substrate D-amino acid to the pyridoxal phosphate cofactor to form pyridoxamine and an alpha-keto acid in the first half-reaction. The second half-reaction is the reverse of the first, transferring the amino group from the pyridoxamine to a second alpha-keto acid to form the product D-amino acid via a ping-pong mechanism. This is an important process in the formation of D-alanine and D-glutamate, which are essential bacterial cell wall components (By similarity).</text>
</comment>
<comment type="catalytic activity">
    <reaction>
        <text>D-alanine + 2-oxoglutarate = D-glutamate + pyruvate</text>
        <dbReference type="Rhea" id="RHEA:15869"/>
        <dbReference type="ChEBI" id="CHEBI:15361"/>
        <dbReference type="ChEBI" id="CHEBI:16810"/>
        <dbReference type="ChEBI" id="CHEBI:29986"/>
        <dbReference type="ChEBI" id="CHEBI:57416"/>
        <dbReference type="EC" id="2.6.1.21"/>
    </reaction>
</comment>
<comment type="cofactor">
    <cofactor evidence="1">
        <name>pyridoxal 5'-phosphate</name>
        <dbReference type="ChEBI" id="CHEBI:597326"/>
    </cofactor>
</comment>
<comment type="subunit">
    <text evidence="1">Homodimer.</text>
</comment>
<comment type="similarity">
    <text evidence="3">Belongs to the class-IV pyridoxal-phosphate-dependent aminotransferase family.</text>
</comment>